<name>3SO62_NAJHH</name>
<proteinExistence type="evidence at protein level"/>
<reference key="1">
    <citation type="journal article" date="1978" name="Eur. J. Biochem.">
        <title>Naja haje haje (Egyptian cobra) venom. Some properties and the complete primary structure of three toxins (CM-2, CM-11 and CM-12).</title>
        <authorList>
            <person name="Joubert F.J."/>
            <person name="Taljaard N."/>
        </authorList>
    </citation>
    <scope>PROTEIN SEQUENCE</scope>
    <scope>TOXIC DOSE</scope>
    <scope>SUBCELLULAR LOCATION</scope>
    <source>
        <tissue>Venom</tissue>
    </source>
</reference>
<evidence type="ECO:0000250" key="1">
    <source>
        <dbReference type="UniProtKB" id="P60301"/>
    </source>
</evidence>
<evidence type="ECO:0000269" key="2">
    <source>
    </source>
</evidence>
<evidence type="ECO:0000305" key="3"/>
<keyword id="KW-0903">Direct protein sequencing</keyword>
<keyword id="KW-1015">Disulfide bond</keyword>
<keyword id="KW-0964">Secreted</keyword>
<keyword id="KW-0800">Toxin</keyword>
<sequence>FTCFTTPSDTSETCPDGQNICYEKRWNSHQGVEIKGCVASCPEFESRFRYLLCCRIDNCNK</sequence>
<accession>P01415</accession>
<organism>
    <name type="scientific">Naja haje haje</name>
    <name type="common">Egyptian cobra</name>
    <dbReference type="NCBI Taxonomy" id="8642"/>
    <lineage>
        <taxon>Eukaryota</taxon>
        <taxon>Metazoa</taxon>
        <taxon>Chordata</taxon>
        <taxon>Craniata</taxon>
        <taxon>Vertebrata</taxon>
        <taxon>Euteleostomi</taxon>
        <taxon>Lepidosauria</taxon>
        <taxon>Squamata</taxon>
        <taxon>Bifurcata</taxon>
        <taxon>Unidentata</taxon>
        <taxon>Episquamata</taxon>
        <taxon>Toxicofera</taxon>
        <taxon>Serpentes</taxon>
        <taxon>Colubroidea</taxon>
        <taxon>Elapidae</taxon>
        <taxon>Elapinae</taxon>
        <taxon>Naja</taxon>
    </lineage>
</organism>
<feature type="chain" id="PRO_0000093624" description="Weak toxin CM-2" evidence="2">
    <location>
        <begin position="1"/>
        <end position="61"/>
    </location>
</feature>
<feature type="disulfide bond" evidence="1">
    <location>
        <begin position="3"/>
        <end position="21"/>
    </location>
</feature>
<feature type="disulfide bond" evidence="1">
    <location>
        <begin position="14"/>
        <end position="37"/>
    </location>
</feature>
<feature type="disulfide bond" evidence="1">
    <location>
        <begin position="41"/>
        <end position="53"/>
    </location>
</feature>
<feature type="disulfide bond" evidence="1">
    <location>
        <begin position="54"/>
        <end position="59"/>
    </location>
</feature>
<comment type="subcellular location">
    <subcellularLocation>
        <location evidence="2">Secreted</location>
    </subcellularLocation>
</comment>
<comment type="tissue specificity">
    <text evidence="3">Expressed by the venom gland.</text>
</comment>
<comment type="toxic dose">
    <text evidence="2">LD(50) is 16.1 mg/kg by subcutaneous injection.</text>
</comment>
<comment type="similarity">
    <text evidence="3">Belongs to the three-finger toxin family. Short-chain subfamily. Orphan group VI sub-subfamily.</text>
</comment>
<protein>
    <recommendedName>
        <fullName>Weak toxin CM-2</fullName>
    </recommendedName>
</protein>
<dbReference type="PIR" id="A01685">
    <property type="entry name" value="T2NJ2Y"/>
</dbReference>
<dbReference type="SMR" id="P01415"/>
<dbReference type="GO" id="GO:0005576">
    <property type="term" value="C:extracellular region"/>
    <property type="evidence" value="ECO:0007669"/>
    <property type="project" value="UniProtKB-SubCell"/>
</dbReference>
<dbReference type="GO" id="GO:0090729">
    <property type="term" value="F:toxin activity"/>
    <property type="evidence" value="ECO:0007669"/>
    <property type="project" value="UniProtKB-KW"/>
</dbReference>
<dbReference type="CDD" id="cd00206">
    <property type="entry name" value="TFP_snake_toxin"/>
    <property type="match status" value="1"/>
</dbReference>
<dbReference type="Gene3D" id="2.10.60.10">
    <property type="entry name" value="CD59"/>
    <property type="match status" value="1"/>
</dbReference>
<dbReference type="InterPro" id="IPR003571">
    <property type="entry name" value="Snake_3FTx"/>
</dbReference>
<dbReference type="InterPro" id="IPR045860">
    <property type="entry name" value="Snake_toxin-like_sf"/>
</dbReference>
<dbReference type="InterPro" id="IPR018354">
    <property type="entry name" value="Snake_toxin_con_site"/>
</dbReference>
<dbReference type="InterPro" id="IPR054131">
    <property type="entry name" value="Toxin_cobra-type"/>
</dbReference>
<dbReference type="Pfam" id="PF21947">
    <property type="entry name" value="Toxin_cobra-type"/>
    <property type="match status" value="1"/>
</dbReference>
<dbReference type="SUPFAM" id="SSF57302">
    <property type="entry name" value="Snake toxin-like"/>
    <property type="match status" value="1"/>
</dbReference>
<dbReference type="PROSITE" id="PS00272">
    <property type="entry name" value="SNAKE_TOXIN"/>
    <property type="match status" value="1"/>
</dbReference>